<gene>
    <name type="primary">PSMD11</name>
</gene>
<comment type="function">
    <text evidence="2">Component of the 26S proteasome, a multiprotein complex involved in the ATP-dependent degradation of ubiquitinated proteins. This complex plays a key role in the maintenance of protein homeostasis by removing misfolded or damaged proteins, which could impair cellular functions, and by removing proteins whose functions are no longer required. Therefore, the proteasome participates in numerous cellular processes, including cell cycle progression, apoptosis, or DNA damage repair. In the complex, PSMD11 is required for proteasome assembly. Plays a key role in increased proteasome activity in embryonic stem cells (ESCs): its high expression in ESCs promotes enhanced assembly of the 26S proteasome, followed by higher proteasome activity.</text>
</comment>
<comment type="subunit">
    <text evidence="2">Component of the 19S proteasome regulatory particle complex. The 26S proteasome consists of a 20S core particle (CP) and two 19S regulatory subunits (RP). The regulatory particle is made of a lid composed of 9 subunits including PSMD11, a base containing 6 ATPases and few additional components.</text>
</comment>
<comment type="subcellular location">
    <subcellularLocation>
        <location evidence="1">Nucleus</location>
    </subcellularLocation>
    <subcellularLocation>
        <location evidence="1">Cytoplasm</location>
        <location evidence="1">Cytosol</location>
    </subcellularLocation>
</comment>
<comment type="alternative products">
    <event type="alternative splicing"/>
    <isoform>
        <id>Q2KI42-1</id>
        <name>1</name>
        <sequence type="displayed"/>
    </isoform>
    <isoform>
        <id>Q2KI42-2</id>
        <name>2</name>
        <sequence type="described" ref="VSP_044398 VSP_044399"/>
    </isoform>
</comment>
<comment type="PTM">
    <text evidence="1">Phosphorylated by AMPK.</text>
</comment>
<comment type="similarity">
    <text evidence="5">Belongs to the proteasome subunit S9 family.</text>
</comment>
<accession>Q2KI42</accession>
<accession>A1L5A1</accession>
<accession>F1MXM5</accession>
<keyword id="KW-0007">Acetylation</keyword>
<keyword id="KW-0025">Alternative splicing</keyword>
<keyword id="KW-0963">Cytoplasm</keyword>
<keyword id="KW-1017">Isopeptide bond</keyword>
<keyword id="KW-0539">Nucleus</keyword>
<keyword id="KW-0597">Phosphoprotein</keyword>
<keyword id="KW-0647">Proteasome</keyword>
<keyword id="KW-1185">Reference proteome</keyword>
<keyword id="KW-0832">Ubl conjugation</keyword>
<evidence type="ECO:0000250" key="1"/>
<evidence type="ECO:0000250" key="2">
    <source>
        <dbReference type="UniProtKB" id="O00231"/>
    </source>
</evidence>
<evidence type="ECO:0000255" key="3">
    <source>
        <dbReference type="PROSITE-ProRule" id="PRU01185"/>
    </source>
</evidence>
<evidence type="ECO:0000303" key="4">
    <source>
    </source>
</evidence>
<evidence type="ECO:0000305" key="5"/>
<sequence>MAAAAVVEFQRAQSLLSTDREASIDILHSIVKRDIQENDEEAVQVKEQSILELGSLLAKTGQAAELGGLLKYVRPFLNSISKAKAARLVRSLLDLFLDMEAATGQEVELCLECIEWAKSEKRTFLRQALEARLVSLYFDTKRYQEALHLGSQLLRELKKMDDKALLVEVQLLESKTYHALSNLPKARAALTSARTTANAIYCPPKLQATLDMQSGIIHAAEEKDWKTAYSYFYEAFEGYDSIDSPKAITSLKYMLLCKIMLNTPEDVQALVSGKLALRYAGRQTEALKCVAQASKNRSLADFEKALTDYRAELRDDPIISTHLAKLYDNLLEQNLIRVIEPFSRVQIEHISSLIKLSKADVERKLSQMILDKKFHGILDQGEGVLIIFDEPPVDKTYEAALETIQNMSKVVDSLYNKAKKLT</sequence>
<protein>
    <recommendedName>
        <fullName>26S proteasome non-ATPase regulatory subunit 11</fullName>
    </recommendedName>
    <alternativeName>
        <fullName>26S proteasome regulatory subunit RPN6</fullName>
    </alternativeName>
</protein>
<feature type="initiator methionine" description="Removed" evidence="2">
    <location>
        <position position="1"/>
    </location>
</feature>
<feature type="chain" id="PRO_0000244592" description="26S proteasome non-ATPase regulatory subunit 11">
    <location>
        <begin position="2"/>
        <end position="422"/>
    </location>
</feature>
<feature type="domain" description="PCI" evidence="3">
    <location>
        <begin position="224"/>
        <end position="392"/>
    </location>
</feature>
<feature type="modified residue" description="N-acetylalanine" evidence="2">
    <location>
        <position position="2"/>
    </location>
</feature>
<feature type="modified residue" description="Phosphoserine" evidence="2">
    <location>
        <position position="14"/>
    </location>
</feature>
<feature type="modified residue" description="Phosphoserine" evidence="2">
    <location>
        <position position="23"/>
    </location>
</feature>
<feature type="cross-link" description="Glycyl lysine isopeptide (Lys-Gly) (interchain with G-Cter in SUMO2)" evidence="2">
    <location>
        <position position="274"/>
    </location>
</feature>
<feature type="splice variant" id="VSP_044398" description="In isoform 2." evidence="4">
    <original>I</original>
    <variation>E</variation>
    <location>
        <position position="377"/>
    </location>
</feature>
<feature type="splice variant" id="VSP_044399" description="In isoform 2." evidence="4">
    <location>
        <begin position="378"/>
        <end position="422"/>
    </location>
</feature>
<name>PSD11_BOVIN</name>
<dbReference type="EMBL" id="BT029888">
    <property type="protein sequence ID" value="ABM06138.1"/>
    <property type="molecule type" value="mRNA"/>
</dbReference>
<dbReference type="EMBL" id="DAAA02048509">
    <property type="status" value="NOT_ANNOTATED_CDS"/>
    <property type="molecule type" value="Genomic_DNA"/>
</dbReference>
<dbReference type="EMBL" id="DAAA02048510">
    <property type="status" value="NOT_ANNOTATED_CDS"/>
    <property type="molecule type" value="Genomic_DNA"/>
</dbReference>
<dbReference type="EMBL" id="BC112777">
    <property type="protein sequence ID" value="AAI12778.1"/>
    <property type="molecule type" value="mRNA"/>
</dbReference>
<dbReference type="RefSeq" id="NP_001039613.1">
    <molecule id="Q2KI42-1"/>
    <property type="nucleotide sequence ID" value="NM_001046148.1"/>
</dbReference>
<dbReference type="RefSeq" id="XP_024835783.1">
    <molecule id="Q2KI42-1"/>
    <property type="nucleotide sequence ID" value="XM_024980015.2"/>
</dbReference>
<dbReference type="SMR" id="Q2KI42"/>
<dbReference type="FunCoup" id="Q2KI42">
    <property type="interactions" value="4100"/>
</dbReference>
<dbReference type="STRING" id="9913.ENSBTAP00000059925"/>
<dbReference type="PaxDb" id="9913-ENSBTAP00000025152"/>
<dbReference type="PeptideAtlas" id="Q2KI42"/>
<dbReference type="GeneID" id="513461"/>
<dbReference type="KEGG" id="bta:513461"/>
<dbReference type="CTD" id="5717"/>
<dbReference type="VEuPathDB" id="HostDB:ENSBTAG00000018897"/>
<dbReference type="eggNOG" id="KOG1463">
    <property type="taxonomic scope" value="Eukaryota"/>
</dbReference>
<dbReference type="HOGENOM" id="CLU_029573_2_1_1"/>
<dbReference type="InParanoid" id="Q2KI42"/>
<dbReference type="OMA" id="ESKIYHA"/>
<dbReference type="OrthoDB" id="1418352at2759"/>
<dbReference type="TreeFam" id="TF106230"/>
<dbReference type="Reactome" id="R-BTA-1169091">
    <property type="pathway name" value="Activation of NF-kappaB in B cells"/>
</dbReference>
<dbReference type="Reactome" id="R-BTA-1234176">
    <property type="pathway name" value="Oxygen-dependent proline hydroxylation of Hypoxia-inducible Factor Alpha"/>
</dbReference>
<dbReference type="Reactome" id="R-BTA-1236978">
    <property type="pathway name" value="Cross-presentation of soluble exogenous antigens (endosomes)"/>
</dbReference>
<dbReference type="Reactome" id="R-BTA-174084">
    <property type="pathway name" value="Autodegradation of Cdh1 by Cdh1:APC/C"/>
</dbReference>
<dbReference type="Reactome" id="R-BTA-174154">
    <property type="pathway name" value="APC/C:Cdc20 mediated degradation of Securin"/>
</dbReference>
<dbReference type="Reactome" id="R-BTA-174178">
    <property type="pathway name" value="APC/C:Cdh1 mediated degradation of Cdc20 and other APC/C:Cdh1 targeted proteins in late mitosis/early G1"/>
</dbReference>
<dbReference type="Reactome" id="R-BTA-174184">
    <property type="pathway name" value="Cdc20:Phospho-APC/C mediated degradation of Cyclin A"/>
</dbReference>
<dbReference type="Reactome" id="R-BTA-187577">
    <property type="pathway name" value="SCF(Skp2)-mediated degradation of p27/p21"/>
</dbReference>
<dbReference type="Reactome" id="R-BTA-195253">
    <property type="pathway name" value="Degradation of beta-catenin by the destruction complex"/>
</dbReference>
<dbReference type="Reactome" id="R-BTA-202424">
    <property type="pathway name" value="Downstream TCR signaling"/>
</dbReference>
<dbReference type="Reactome" id="R-BTA-2467813">
    <property type="pathway name" value="Separation of Sister Chromatids"/>
</dbReference>
<dbReference type="Reactome" id="R-BTA-2871837">
    <property type="pathway name" value="FCERI mediated NF-kB activation"/>
</dbReference>
<dbReference type="Reactome" id="R-BTA-349425">
    <property type="pathway name" value="Autodegradation of the E3 ubiquitin ligase COP1"/>
</dbReference>
<dbReference type="Reactome" id="R-BTA-350562">
    <property type="pathway name" value="Regulation of ornithine decarboxylase (ODC)"/>
</dbReference>
<dbReference type="Reactome" id="R-BTA-382556">
    <property type="pathway name" value="ABC-family proteins mediated transport"/>
</dbReference>
<dbReference type="Reactome" id="R-BTA-450408">
    <property type="pathway name" value="AUF1 (hnRNP D0) binds and destabilizes mRNA"/>
</dbReference>
<dbReference type="Reactome" id="R-BTA-4608870">
    <property type="pathway name" value="Asymmetric localization of PCP proteins"/>
</dbReference>
<dbReference type="Reactome" id="R-BTA-4641257">
    <property type="pathway name" value="Degradation of AXIN"/>
</dbReference>
<dbReference type="Reactome" id="R-BTA-4641258">
    <property type="pathway name" value="Degradation of DVL"/>
</dbReference>
<dbReference type="Reactome" id="R-BTA-5358346">
    <property type="pathway name" value="Hedgehog ligand biogenesis"/>
</dbReference>
<dbReference type="Reactome" id="R-BTA-5607761">
    <property type="pathway name" value="Dectin-1 mediated noncanonical NF-kB signaling"/>
</dbReference>
<dbReference type="Reactome" id="R-BTA-5607764">
    <property type="pathway name" value="CLEC7A (Dectin-1) signaling"/>
</dbReference>
<dbReference type="Reactome" id="R-BTA-5610780">
    <property type="pathway name" value="Degradation of GLI1 by the proteasome"/>
</dbReference>
<dbReference type="Reactome" id="R-BTA-5610785">
    <property type="pathway name" value="GLI3 is processed to GLI3R by the proteasome"/>
</dbReference>
<dbReference type="Reactome" id="R-BTA-5632684">
    <property type="pathway name" value="Hedgehog 'on' state"/>
</dbReference>
<dbReference type="Reactome" id="R-BTA-5668541">
    <property type="pathway name" value="TNFR2 non-canonical NF-kB pathway"/>
</dbReference>
<dbReference type="Reactome" id="R-BTA-5676590">
    <property type="pathway name" value="NIK--&gt;noncanonical NF-kB signaling"/>
</dbReference>
<dbReference type="Reactome" id="R-BTA-5687128">
    <property type="pathway name" value="MAPK6/MAPK4 signaling"/>
</dbReference>
<dbReference type="Reactome" id="R-BTA-5689603">
    <property type="pathway name" value="UCH proteinases"/>
</dbReference>
<dbReference type="Reactome" id="R-BTA-5689880">
    <property type="pathway name" value="Ub-specific processing proteases"/>
</dbReference>
<dbReference type="Reactome" id="R-BTA-6798695">
    <property type="pathway name" value="Neutrophil degranulation"/>
</dbReference>
<dbReference type="Reactome" id="R-BTA-68867">
    <property type="pathway name" value="Assembly of the pre-replicative complex"/>
</dbReference>
<dbReference type="Reactome" id="R-BTA-68949">
    <property type="pathway name" value="Orc1 removal from chromatin"/>
</dbReference>
<dbReference type="Reactome" id="R-BTA-69017">
    <property type="pathway name" value="CDK-mediated phosphorylation and removal of Cdc6"/>
</dbReference>
<dbReference type="Reactome" id="R-BTA-69481">
    <property type="pathway name" value="G2/M Checkpoints"/>
</dbReference>
<dbReference type="Reactome" id="R-BTA-69601">
    <property type="pathway name" value="Ubiquitin Mediated Degradation of Phosphorylated Cdc25A"/>
</dbReference>
<dbReference type="Reactome" id="R-BTA-75815">
    <property type="pathway name" value="Ubiquitin-dependent degradation of Cyclin D"/>
</dbReference>
<dbReference type="Reactome" id="R-BTA-8852276">
    <property type="pathway name" value="The role of GTSE1 in G2/M progression after G2 checkpoint"/>
</dbReference>
<dbReference type="Reactome" id="R-BTA-8854050">
    <property type="pathway name" value="FBXL7 down-regulates AURKA during mitotic entry and in early mitosis"/>
</dbReference>
<dbReference type="Reactome" id="R-BTA-8939236">
    <property type="pathway name" value="RUNX1 regulates transcription of genes involved in differentiation of HSCs"/>
</dbReference>
<dbReference type="Reactome" id="R-BTA-8939902">
    <property type="pathway name" value="Regulation of RUNX2 expression and activity"/>
</dbReference>
<dbReference type="Reactome" id="R-BTA-8941858">
    <property type="pathway name" value="Regulation of RUNX3 expression and activity"/>
</dbReference>
<dbReference type="Reactome" id="R-BTA-8948751">
    <property type="pathway name" value="Regulation of PTEN stability and activity"/>
</dbReference>
<dbReference type="Reactome" id="R-BTA-8951664">
    <property type="pathway name" value="Neddylation"/>
</dbReference>
<dbReference type="Reactome" id="R-BTA-9020702">
    <property type="pathway name" value="Interleukin-1 signaling"/>
</dbReference>
<dbReference type="Reactome" id="R-BTA-9755511">
    <property type="pathway name" value="KEAP1-NFE2L2 pathway"/>
</dbReference>
<dbReference type="Reactome" id="R-BTA-9762114">
    <property type="pathway name" value="GSK3B and BTRC:CUL1-mediated-degradation of NFE2L2"/>
</dbReference>
<dbReference type="Reactome" id="R-BTA-983168">
    <property type="pathway name" value="Antigen processing: Ubiquitination &amp; Proteasome degradation"/>
</dbReference>
<dbReference type="Reactome" id="R-BTA-9907900">
    <property type="pathway name" value="Proteasome assembly"/>
</dbReference>
<dbReference type="Proteomes" id="UP000009136">
    <property type="component" value="Chromosome 19"/>
</dbReference>
<dbReference type="Bgee" id="ENSBTAG00000018897">
    <property type="expression patterns" value="Expressed in oocyte and 104 other cell types or tissues"/>
</dbReference>
<dbReference type="GO" id="GO:0005829">
    <property type="term" value="C:cytosol"/>
    <property type="evidence" value="ECO:0000304"/>
    <property type="project" value="Reactome"/>
</dbReference>
<dbReference type="GO" id="GO:0005634">
    <property type="term" value="C:nucleus"/>
    <property type="evidence" value="ECO:0007669"/>
    <property type="project" value="UniProtKB-SubCell"/>
</dbReference>
<dbReference type="GO" id="GO:0022624">
    <property type="term" value="C:proteasome accessory complex"/>
    <property type="evidence" value="ECO:0000250"/>
    <property type="project" value="UniProtKB"/>
</dbReference>
<dbReference type="GO" id="GO:0008541">
    <property type="term" value="C:proteasome regulatory particle, lid subcomplex"/>
    <property type="evidence" value="ECO:0000318"/>
    <property type="project" value="GO_Central"/>
</dbReference>
<dbReference type="GO" id="GO:0005198">
    <property type="term" value="F:structural molecule activity"/>
    <property type="evidence" value="ECO:0000318"/>
    <property type="project" value="GO_Central"/>
</dbReference>
<dbReference type="GO" id="GO:0043248">
    <property type="term" value="P:proteasome assembly"/>
    <property type="evidence" value="ECO:0000250"/>
    <property type="project" value="UniProtKB"/>
</dbReference>
<dbReference type="GO" id="GO:0048863">
    <property type="term" value="P:stem cell differentiation"/>
    <property type="evidence" value="ECO:0000250"/>
    <property type="project" value="UniProtKB"/>
</dbReference>
<dbReference type="GO" id="GO:0006511">
    <property type="term" value="P:ubiquitin-dependent protein catabolic process"/>
    <property type="evidence" value="ECO:0000250"/>
    <property type="project" value="UniProtKB"/>
</dbReference>
<dbReference type="FunFam" id="1.25.40.570:FF:000003">
    <property type="entry name" value="26S proteasome non-ATPase regulatory subunit 11"/>
    <property type="match status" value="1"/>
</dbReference>
<dbReference type="Gene3D" id="1.25.40.570">
    <property type="match status" value="1"/>
</dbReference>
<dbReference type="InterPro" id="IPR050871">
    <property type="entry name" value="26S_Proteasome/COP9_Components"/>
</dbReference>
<dbReference type="InterPro" id="IPR000717">
    <property type="entry name" value="PCI_dom"/>
</dbReference>
<dbReference type="InterPro" id="IPR040780">
    <property type="entry name" value="Rpn6_C_helix"/>
</dbReference>
<dbReference type="InterPro" id="IPR040773">
    <property type="entry name" value="Rpn6_N"/>
</dbReference>
<dbReference type="InterPro" id="IPR011990">
    <property type="entry name" value="TPR-like_helical_dom_sf"/>
</dbReference>
<dbReference type="InterPro" id="IPR036390">
    <property type="entry name" value="WH_DNA-bd_sf"/>
</dbReference>
<dbReference type="PANTHER" id="PTHR10678">
    <property type="entry name" value="26S PROTEASOME NON-ATPASE REGULATORY SUBUNIT 11/COP9 SIGNALOSOME COMPLEX SUBUNIT 2"/>
    <property type="match status" value="1"/>
</dbReference>
<dbReference type="Pfam" id="PF01399">
    <property type="entry name" value="PCI"/>
    <property type="match status" value="1"/>
</dbReference>
<dbReference type="Pfam" id="PF18503">
    <property type="entry name" value="RPN6_C_helix"/>
    <property type="match status" value="1"/>
</dbReference>
<dbReference type="Pfam" id="PF18055">
    <property type="entry name" value="RPN6_N"/>
    <property type="match status" value="1"/>
</dbReference>
<dbReference type="SMART" id="SM00753">
    <property type="entry name" value="PAM"/>
    <property type="match status" value="1"/>
</dbReference>
<dbReference type="SMART" id="SM00088">
    <property type="entry name" value="PINT"/>
    <property type="match status" value="1"/>
</dbReference>
<dbReference type="SUPFAM" id="SSF48452">
    <property type="entry name" value="TPR-like"/>
    <property type="match status" value="1"/>
</dbReference>
<dbReference type="SUPFAM" id="SSF46785">
    <property type="entry name" value="Winged helix' DNA-binding domain"/>
    <property type="match status" value="1"/>
</dbReference>
<dbReference type="PROSITE" id="PS50250">
    <property type="entry name" value="PCI"/>
    <property type="match status" value="1"/>
</dbReference>
<reference key="1">
    <citation type="journal article" date="2002" name="Mamm. Genome">
        <title>Analysis of bovine mammary gland EST and functional annotation of the Bos taurus gene index.</title>
        <authorList>
            <person name="Sonstegard T.S."/>
            <person name="Capuco A.V."/>
            <person name="White J."/>
            <person name="Van Tassell C.P."/>
            <person name="Connor E.E."/>
            <person name="Cho J."/>
            <person name="Sultana R."/>
            <person name="Shade L."/>
            <person name="Wray J.E."/>
            <person name="Wells K.D."/>
            <person name="Quackenbush J."/>
        </authorList>
    </citation>
    <scope>NUCLEOTIDE SEQUENCE [MRNA] (ISOFORM 2)</scope>
</reference>
<reference key="2">
    <citation type="journal article" date="2009" name="Genome Biol.">
        <title>A whole-genome assembly of the domestic cow, Bos taurus.</title>
        <authorList>
            <person name="Zimin A.V."/>
            <person name="Delcher A.L."/>
            <person name="Florea L."/>
            <person name="Kelley D.R."/>
            <person name="Schatz M.C."/>
            <person name="Puiu D."/>
            <person name="Hanrahan F."/>
            <person name="Pertea G."/>
            <person name="Van Tassell C.P."/>
            <person name="Sonstegard T.S."/>
            <person name="Marcais G."/>
            <person name="Roberts M."/>
            <person name="Subramanian P."/>
            <person name="Yorke J.A."/>
            <person name="Salzberg S.L."/>
        </authorList>
    </citation>
    <scope>NUCLEOTIDE SEQUENCE [LARGE SCALE GENOMIC DNA]</scope>
    <source>
        <strain>Hereford</strain>
    </source>
</reference>
<reference key="3">
    <citation type="submission" date="2006-01" db="EMBL/GenBank/DDBJ databases">
        <authorList>
            <consortium name="NIH - Mammalian Gene Collection (MGC) project"/>
        </authorList>
    </citation>
    <scope>NUCLEOTIDE SEQUENCE [LARGE SCALE MRNA] (ISOFORM 1)</scope>
    <source>
        <strain>Hereford</strain>
        <tissue>Hypothalamus</tissue>
    </source>
</reference>
<proteinExistence type="evidence at transcript level"/>
<organism>
    <name type="scientific">Bos taurus</name>
    <name type="common">Bovine</name>
    <dbReference type="NCBI Taxonomy" id="9913"/>
    <lineage>
        <taxon>Eukaryota</taxon>
        <taxon>Metazoa</taxon>
        <taxon>Chordata</taxon>
        <taxon>Craniata</taxon>
        <taxon>Vertebrata</taxon>
        <taxon>Euteleostomi</taxon>
        <taxon>Mammalia</taxon>
        <taxon>Eutheria</taxon>
        <taxon>Laurasiatheria</taxon>
        <taxon>Artiodactyla</taxon>
        <taxon>Ruminantia</taxon>
        <taxon>Pecora</taxon>
        <taxon>Bovidae</taxon>
        <taxon>Bovinae</taxon>
        <taxon>Bos</taxon>
    </lineage>
</organism>